<keyword id="KW-0378">Hydrolase</keyword>
<keyword id="KW-0511">Multifunctional enzyme</keyword>
<keyword id="KW-0658">Purine biosynthesis</keyword>
<keyword id="KW-0808">Transferase</keyword>
<gene>
    <name evidence="1" type="primary">purH</name>
    <name type="ordered locus">RL4722</name>
</gene>
<protein>
    <recommendedName>
        <fullName evidence="1">Bifunctional purine biosynthesis protein PurH</fullName>
    </recommendedName>
    <domain>
        <recommendedName>
            <fullName evidence="1">Phosphoribosylaminoimidazolecarboxamide formyltransferase</fullName>
            <ecNumber evidence="1">2.1.2.3</ecNumber>
        </recommendedName>
        <alternativeName>
            <fullName evidence="1">AICAR transformylase</fullName>
        </alternativeName>
    </domain>
    <domain>
        <recommendedName>
            <fullName evidence="1">IMP cyclohydrolase</fullName>
            <ecNumber evidence="1">3.5.4.10</ecNumber>
        </recommendedName>
        <alternativeName>
            <fullName evidence="1">ATIC</fullName>
        </alternativeName>
        <alternativeName>
            <fullName evidence="1">IMP synthase</fullName>
        </alternativeName>
        <alternativeName>
            <fullName evidence="1">Inosinicase</fullName>
        </alternativeName>
    </domain>
</protein>
<proteinExistence type="inferred from homology"/>
<dbReference type="EC" id="2.1.2.3" evidence="1"/>
<dbReference type="EC" id="3.5.4.10" evidence="1"/>
<dbReference type="EMBL" id="AM236080">
    <property type="protein sequence ID" value="CAK10205.1"/>
    <property type="molecule type" value="Genomic_DNA"/>
</dbReference>
<dbReference type="RefSeq" id="WP_011654051.1">
    <property type="nucleotide sequence ID" value="NC_008380.1"/>
</dbReference>
<dbReference type="SMR" id="Q1MA35"/>
<dbReference type="EnsemblBacteria" id="CAK10205">
    <property type="protein sequence ID" value="CAK10205"/>
    <property type="gene ID" value="RL4722"/>
</dbReference>
<dbReference type="KEGG" id="rle:RL4722"/>
<dbReference type="eggNOG" id="COG0138">
    <property type="taxonomic scope" value="Bacteria"/>
</dbReference>
<dbReference type="HOGENOM" id="CLU_016316_5_2_5"/>
<dbReference type="UniPathway" id="UPA00074">
    <property type="reaction ID" value="UER00133"/>
</dbReference>
<dbReference type="UniPathway" id="UPA00074">
    <property type="reaction ID" value="UER00135"/>
</dbReference>
<dbReference type="Proteomes" id="UP000006575">
    <property type="component" value="Chromosome"/>
</dbReference>
<dbReference type="GO" id="GO:0005829">
    <property type="term" value="C:cytosol"/>
    <property type="evidence" value="ECO:0007669"/>
    <property type="project" value="TreeGrafter"/>
</dbReference>
<dbReference type="GO" id="GO:0003937">
    <property type="term" value="F:IMP cyclohydrolase activity"/>
    <property type="evidence" value="ECO:0007669"/>
    <property type="project" value="UniProtKB-UniRule"/>
</dbReference>
<dbReference type="GO" id="GO:0004643">
    <property type="term" value="F:phosphoribosylaminoimidazolecarboxamide formyltransferase activity"/>
    <property type="evidence" value="ECO:0007669"/>
    <property type="project" value="UniProtKB-UniRule"/>
</dbReference>
<dbReference type="GO" id="GO:0006189">
    <property type="term" value="P:'de novo' IMP biosynthetic process"/>
    <property type="evidence" value="ECO:0007669"/>
    <property type="project" value="UniProtKB-UniRule"/>
</dbReference>
<dbReference type="CDD" id="cd01421">
    <property type="entry name" value="IMPCH"/>
    <property type="match status" value="1"/>
</dbReference>
<dbReference type="FunFam" id="3.40.140.20:FF:000001">
    <property type="entry name" value="Bifunctional purine biosynthesis protein PurH"/>
    <property type="match status" value="1"/>
</dbReference>
<dbReference type="FunFam" id="3.40.140.20:FF:000002">
    <property type="entry name" value="Bifunctional purine biosynthesis protein PurH"/>
    <property type="match status" value="1"/>
</dbReference>
<dbReference type="FunFam" id="3.40.50.1380:FF:000001">
    <property type="entry name" value="Bifunctional purine biosynthesis protein PurH"/>
    <property type="match status" value="1"/>
</dbReference>
<dbReference type="Gene3D" id="3.40.140.20">
    <property type="match status" value="2"/>
</dbReference>
<dbReference type="Gene3D" id="3.40.50.1380">
    <property type="entry name" value="Methylglyoxal synthase-like domain"/>
    <property type="match status" value="1"/>
</dbReference>
<dbReference type="HAMAP" id="MF_00139">
    <property type="entry name" value="PurH"/>
    <property type="match status" value="1"/>
</dbReference>
<dbReference type="InterPro" id="IPR024051">
    <property type="entry name" value="AICAR_Tfase_dup_dom_sf"/>
</dbReference>
<dbReference type="InterPro" id="IPR016193">
    <property type="entry name" value="Cytidine_deaminase-like"/>
</dbReference>
<dbReference type="InterPro" id="IPR011607">
    <property type="entry name" value="MGS-like_dom"/>
</dbReference>
<dbReference type="InterPro" id="IPR036914">
    <property type="entry name" value="MGS-like_dom_sf"/>
</dbReference>
<dbReference type="InterPro" id="IPR002695">
    <property type="entry name" value="PurH-like"/>
</dbReference>
<dbReference type="NCBIfam" id="NF002049">
    <property type="entry name" value="PRK00881.1"/>
    <property type="match status" value="1"/>
</dbReference>
<dbReference type="NCBIfam" id="TIGR00355">
    <property type="entry name" value="purH"/>
    <property type="match status" value="1"/>
</dbReference>
<dbReference type="PANTHER" id="PTHR11692:SF0">
    <property type="entry name" value="BIFUNCTIONAL PURINE BIOSYNTHESIS PROTEIN ATIC"/>
    <property type="match status" value="1"/>
</dbReference>
<dbReference type="PANTHER" id="PTHR11692">
    <property type="entry name" value="BIFUNCTIONAL PURINE BIOSYNTHESIS PROTEIN PURH"/>
    <property type="match status" value="1"/>
</dbReference>
<dbReference type="Pfam" id="PF01808">
    <property type="entry name" value="AICARFT_IMPCHas"/>
    <property type="match status" value="1"/>
</dbReference>
<dbReference type="Pfam" id="PF02142">
    <property type="entry name" value="MGS"/>
    <property type="match status" value="1"/>
</dbReference>
<dbReference type="PIRSF" id="PIRSF000414">
    <property type="entry name" value="AICARFT_IMPCHas"/>
    <property type="match status" value="1"/>
</dbReference>
<dbReference type="SMART" id="SM00798">
    <property type="entry name" value="AICARFT_IMPCHas"/>
    <property type="match status" value="1"/>
</dbReference>
<dbReference type="SMART" id="SM00851">
    <property type="entry name" value="MGS"/>
    <property type="match status" value="1"/>
</dbReference>
<dbReference type="SUPFAM" id="SSF53927">
    <property type="entry name" value="Cytidine deaminase-like"/>
    <property type="match status" value="1"/>
</dbReference>
<dbReference type="SUPFAM" id="SSF52335">
    <property type="entry name" value="Methylglyoxal synthase-like"/>
    <property type="match status" value="1"/>
</dbReference>
<dbReference type="PROSITE" id="PS51855">
    <property type="entry name" value="MGS"/>
    <property type="match status" value="1"/>
</dbReference>
<sequence>MAVISKKIPAPDKVEIKTALISVFDKTGIVDLARALSARGVRLLSTGGTFKAITAAGLAVTDVSEITGFPEIMDGRVKTLHPTVHGGLLAIRDDSEHQDAMKQHGIEGIDLAVINLYPFEEVRAAGGDYPTTVENIDIGGPAMIRASAKNHAYVTTLTDPADYAELLEQLSADDGKTAYTFRQRMAAKAYARTAAYDAMISNWFAETLSIDTPRHRVIGGALKEEMRYGENPHQKAAFYVTGEKRPGVSTAALLQGKQLSYNNINDTDAAYELVAEFLPEKAPACAIIKHANPCGVATGSSLVEAYRRALACDSVSAFGGIIALNQTLDAETAEEIVKLFTEVIIAPDVTEEAKAIVARKPNLRLLSAGGLPDPRAVGLTAKTVSGGLLVQSRDNGMVEDLELKVVTRRAPTAQELDDMKFAFKVGKHVKSNAVVYAKDGQTAGIGAGQMSRVDSARIAALKAEEAAKALGLAVPMTHGSAVASEAFLPFADGLLSMIAAGATAVIQPGGSMRDQEVIDAANEHGVAMVFTGMRHFRH</sequence>
<organism>
    <name type="scientific">Rhizobium johnstonii (strain DSM 114642 / LMG 32736 / 3841)</name>
    <name type="common">Rhizobium leguminosarum bv. viciae</name>
    <dbReference type="NCBI Taxonomy" id="216596"/>
    <lineage>
        <taxon>Bacteria</taxon>
        <taxon>Pseudomonadati</taxon>
        <taxon>Pseudomonadota</taxon>
        <taxon>Alphaproteobacteria</taxon>
        <taxon>Hyphomicrobiales</taxon>
        <taxon>Rhizobiaceae</taxon>
        <taxon>Rhizobium/Agrobacterium group</taxon>
        <taxon>Rhizobium</taxon>
        <taxon>Rhizobium johnstonii</taxon>
    </lineage>
</organism>
<accession>Q1MA35</accession>
<feature type="chain" id="PRO_1000018948" description="Bifunctional purine biosynthesis protein PurH">
    <location>
        <begin position="1"/>
        <end position="538"/>
    </location>
</feature>
<feature type="domain" description="MGS-like" evidence="2">
    <location>
        <begin position="8"/>
        <end position="158"/>
    </location>
</feature>
<evidence type="ECO:0000255" key="1">
    <source>
        <dbReference type="HAMAP-Rule" id="MF_00139"/>
    </source>
</evidence>
<evidence type="ECO:0000255" key="2">
    <source>
        <dbReference type="PROSITE-ProRule" id="PRU01202"/>
    </source>
</evidence>
<reference key="1">
    <citation type="journal article" date="2006" name="Genome Biol.">
        <title>The genome of Rhizobium leguminosarum has recognizable core and accessory components.</title>
        <authorList>
            <person name="Young J.P.W."/>
            <person name="Crossman L.C."/>
            <person name="Johnston A.W.B."/>
            <person name="Thomson N.R."/>
            <person name="Ghazoui Z.F."/>
            <person name="Hull K.H."/>
            <person name="Wexler M."/>
            <person name="Curson A.R.J."/>
            <person name="Todd J.D."/>
            <person name="Poole P.S."/>
            <person name="Mauchline T.H."/>
            <person name="East A.K."/>
            <person name="Quail M.A."/>
            <person name="Churcher C."/>
            <person name="Arrowsmith C."/>
            <person name="Cherevach I."/>
            <person name="Chillingworth T."/>
            <person name="Clarke K."/>
            <person name="Cronin A."/>
            <person name="Davis P."/>
            <person name="Fraser A."/>
            <person name="Hance Z."/>
            <person name="Hauser H."/>
            <person name="Jagels K."/>
            <person name="Moule S."/>
            <person name="Mungall K."/>
            <person name="Norbertczak H."/>
            <person name="Rabbinowitsch E."/>
            <person name="Sanders M."/>
            <person name="Simmonds M."/>
            <person name="Whitehead S."/>
            <person name="Parkhill J."/>
        </authorList>
    </citation>
    <scope>NUCLEOTIDE SEQUENCE [LARGE SCALE GENOMIC DNA]</scope>
    <source>
        <strain>DSM 114642 / LMG 32736 / 3841</strain>
    </source>
</reference>
<name>PUR9_RHIJ3</name>
<comment type="catalytic activity">
    <reaction evidence="1">
        <text>(6R)-10-formyltetrahydrofolate + 5-amino-1-(5-phospho-beta-D-ribosyl)imidazole-4-carboxamide = 5-formamido-1-(5-phospho-D-ribosyl)imidazole-4-carboxamide + (6S)-5,6,7,8-tetrahydrofolate</text>
        <dbReference type="Rhea" id="RHEA:22192"/>
        <dbReference type="ChEBI" id="CHEBI:57453"/>
        <dbReference type="ChEBI" id="CHEBI:58467"/>
        <dbReference type="ChEBI" id="CHEBI:58475"/>
        <dbReference type="ChEBI" id="CHEBI:195366"/>
        <dbReference type="EC" id="2.1.2.3"/>
    </reaction>
</comment>
<comment type="catalytic activity">
    <reaction evidence="1">
        <text>IMP + H2O = 5-formamido-1-(5-phospho-D-ribosyl)imidazole-4-carboxamide</text>
        <dbReference type="Rhea" id="RHEA:18445"/>
        <dbReference type="ChEBI" id="CHEBI:15377"/>
        <dbReference type="ChEBI" id="CHEBI:58053"/>
        <dbReference type="ChEBI" id="CHEBI:58467"/>
        <dbReference type="EC" id="3.5.4.10"/>
    </reaction>
</comment>
<comment type="pathway">
    <text evidence="1">Purine metabolism; IMP biosynthesis via de novo pathway; 5-formamido-1-(5-phospho-D-ribosyl)imidazole-4-carboxamide from 5-amino-1-(5-phospho-D-ribosyl)imidazole-4-carboxamide (10-formyl THF route): step 1/1.</text>
</comment>
<comment type="pathway">
    <text evidence="1">Purine metabolism; IMP biosynthesis via de novo pathway; IMP from 5-formamido-1-(5-phospho-D-ribosyl)imidazole-4-carboxamide: step 1/1.</text>
</comment>
<comment type="domain">
    <text evidence="1">The IMP cyclohydrolase activity resides in the N-terminal region.</text>
</comment>
<comment type="similarity">
    <text evidence="1">Belongs to the PurH family.</text>
</comment>